<keyword id="KW-0027">Amidation</keyword>
<keyword id="KW-0878">Amphibian defense peptide</keyword>
<keyword id="KW-0044">Antibiotic</keyword>
<keyword id="KW-0929">Antimicrobial</keyword>
<keyword id="KW-0165">Cleavage on pair of basic residues</keyword>
<keyword id="KW-0903">Direct protein sequencing</keyword>
<keyword id="KW-0964">Secreted</keyword>
<keyword id="KW-0732">Signal</keyword>
<evidence type="ECO:0000250" key="1">
    <source>
        <dbReference type="UniProtKB" id="P81486"/>
    </source>
</evidence>
<evidence type="ECO:0000255" key="2"/>
<evidence type="ECO:0000256" key="3">
    <source>
        <dbReference type="SAM" id="MobiDB-lite"/>
    </source>
</evidence>
<evidence type="ECO:0000269" key="4">
    <source>
    </source>
</evidence>
<evidence type="ECO:0000303" key="5">
    <source>
    </source>
</evidence>
<evidence type="ECO:0000305" key="6"/>
<evidence type="ECO:0000312" key="7">
    <source>
        <dbReference type="EMBL" id="CAK50803.1"/>
    </source>
</evidence>
<protein>
    <recommendedName>
        <fullName evidence="5">Dermaseptin-H5</fullName>
    </recommendedName>
    <alternativeName>
        <fullName evidence="5">Dermaseptin-like peptide 5</fullName>
        <shortName evidence="5">DMS5</shortName>
    </alternativeName>
</protein>
<name>DMS5_PITAZ</name>
<feature type="signal peptide" evidence="2">
    <location>
        <begin position="1" status="less than"/>
        <end position="17"/>
    </location>
</feature>
<feature type="propeptide" id="PRO_0000248615" evidence="4">
    <location>
        <begin position="18"/>
        <end position="38"/>
    </location>
</feature>
<feature type="peptide" id="PRO_0000248616" description="Dermaseptin-H5" evidence="4">
    <location>
        <begin position="41"/>
        <end position="65"/>
    </location>
</feature>
<feature type="propeptide" id="PRO_0000248617" evidence="4">
    <location>
        <begin position="67"/>
        <end position="68"/>
    </location>
</feature>
<feature type="region of interest" description="Disordered" evidence="3">
    <location>
        <begin position="19"/>
        <end position="40"/>
    </location>
</feature>
<feature type="compositionally biased region" description="Acidic residues" evidence="3">
    <location>
        <begin position="25"/>
        <end position="35"/>
    </location>
</feature>
<feature type="modified residue" description="Leucine amide" evidence="4">
    <location>
        <position position="65"/>
    </location>
</feature>
<feature type="non-terminal residue" evidence="7">
    <location>
        <position position="1"/>
    </location>
</feature>
<accession>Q1EJP4</accession>
<organism>
    <name type="scientific">Pithecopus azureus</name>
    <name type="common">Orange-legged monkey tree frog</name>
    <name type="synonym">Phyllomedusa azurea</name>
    <dbReference type="NCBI Taxonomy" id="2034991"/>
    <lineage>
        <taxon>Eukaryota</taxon>
        <taxon>Metazoa</taxon>
        <taxon>Chordata</taxon>
        <taxon>Craniata</taxon>
        <taxon>Vertebrata</taxon>
        <taxon>Euteleostomi</taxon>
        <taxon>Amphibia</taxon>
        <taxon>Batrachia</taxon>
        <taxon>Anura</taxon>
        <taxon>Neobatrachia</taxon>
        <taxon>Hyloidea</taxon>
        <taxon>Hylidae</taxon>
        <taxon>Phyllomedusinae</taxon>
        <taxon>Pithecopus</taxon>
    </lineage>
</organism>
<sequence length="68" mass="7544">KSLFLVLFLGMVSLSICEEEKRENEDEEKQEDDEQSEMKRGLWSTIKNVGKEAAIAAGKAVLGSLGEQ</sequence>
<gene>
    <name evidence="7" type="primary">dpp-H5</name>
</gene>
<dbReference type="EMBL" id="AM268433">
    <property type="protein sequence ID" value="CAK50803.1"/>
    <property type="molecule type" value="mRNA"/>
</dbReference>
<dbReference type="GO" id="GO:0005576">
    <property type="term" value="C:extracellular region"/>
    <property type="evidence" value="ECO:0007669"/>
    <property type="project" value="UniProtKB-SubCell"/>
</dbReference>
<dbReference type="GO" id="GO:0042742">
    <property type="term" value="P:defense response to bacterium"/>
    <property type="evidence" value="ECO:0007669"/>
    <property type="project" value="UniProtKB-KW"/>
</dbReference>
<dbReference type="InterPro" id="IPR022731">
    <property type="entry name" value="Dermaseptin_dom"/>
</dbReference>
<dbReference type="InterPro" id="IPR004275">
    <property type="entry name" value="Frog_antimicrobial_propeptide"/>
</dbReference>
<dbReference type="InterPro" id="IPR016322">
    <property type="entry name" value="FSAP"/>
</dbReference>
<dbReference type="Pfam" id="PF12121">
    <property type="entry name" value="DD_K"/>
    <property type="match status" value="1"/>
</dbReference>
<dbReference type="Pfam" id="PF03032">
    <property type="entry name" value="FSAP_sig_propep"/>
    <property type="match status" value="1"/>
</dbReference>
<dbReference type="PIRSF" id="PIRSF001822">
    <property type="entry name" value="Dermaseptin_precursor"/>
    <property type="match status" value="1"/>
</dbReference>
<proteinExistence type="evidence at protein level"/>
<comment type="function">
    <text evidence="1 4">Has antibacterial activity against the Gram-negative bacteria E.coli ATCC 11775 (MIC=0.5 uM), and the Gram-positive bacteria S.aureus ATCC 12600 (MIC=0.5 uM) and M.luteus ATCC 49732 (MIC=2.0 uM). Does not inhibit the growth of the fungus C.albicans. Probably acts by disturbing membrane functions with its amphipathic structure.</text>
</comment>
<comment type="subcellular location">
    <subcellularLocation>
        <location evidence="4">Secreted</location>
    </subcellularLocation>
</comment>
<comment type="tissue specificity">
    <text evidence="4">Expressed by the skin glands.</text>
</comment>
<comment type="mass spectrometry" mass="2452.42" method="MALDI" evidence="4"/>
<comment type="similarity">
    <text evidence="2">Belongs to the frog skin active peptide (FSAP) family. Dermaseptin subfamily.</text>
</comment>
<reference evidence="6 7" key="1">
    <citation type="journal article" date="2007" name="Peptides">
        <title>A combined mass spectrometric and cDNA sequencing approach to the isolation and characterization of novel antimicrobial peptides from the skin secretions of Phyllomedusa hypochondrialis azurea.</title>
        <authorList>
            <person name="Thompson A.H."/>
            <person name="Bjourson A.J."/>
            <person name="Orr D.F."/>
            <person name="Shaw C."/>
            <person name="McClean S."/>
        </authorList>
    </citation>
    <scope>NUCLEOTIDE SEQUENCE [MRNA]</scope>
    <scope>PROTEIN SEQUENCE OF 41-65</scope>
    <scope>FUNCTION</scope>
    <scope>SUBCELLULAR LOCATION</scope>
    <scope>TISSUE SPECIFICITY</scope>
    <scope>MASS SPECTROMETRY</scope>
    <scope>AMIDATION AT LEU-65</scope>
    <source>
        <tissue>Skin</tissue>
        <tissue evidence="4">Skin secretion</tissue>
    </source>
</reference>